<dbReference type="EC" id="3.4.11.9"/>
<dbReference type="EMBL" id="GL636500">
    <property type="protein sequence ID" value="EFW15733.1"/>
    <property type="molecule type" value="Genomic_DNA"/>
</dbReference>
<dbReference type="SMR" id="E9DDK8"/>
<dbReference type="STRING" id="443226.E9DDK8"/>
<dbReference type="VEuPathDB" id="FungiDB:CPSG_08170"/>
<dbReference type="VEuPathDB" id="FungiDB:D8B26_002200"/>
<dbReference type="eggNOG" id="KOG2737">
    <property type="taxonomic scope" value="Eukaryota"/>
</dbReference>
<dbReference type="HOGENOM" id="CLU_017266_1_2_1"/>
<dbReference type="OMA" id="DAHALFF"/>
<dbReference type="OrthoDB" id="9302at33183"/>
<dbReference type="Proteomes" id="UP000002497">
    <property type="component" value="Unassembled WGS sequence"/>
</dbReference>
<dbReference type="GO" id="GO:0030145">
    <property type="term" value="F:manganese ion binding"/>
    <property type="evidence" value="ECO:0007669"/>
    <property type="project" value="InterPro"/>
</dbReference>
<dbReference type="GO" id="GO:0070006">
    <property type="term" value="F:metalloaminopeptidase activity"/>
    <property type="evidence" value="ECO:0007669"/>
    <property type="project" value="InterPro"/>
</dbReference>
<dbReference type="GO" id="GO:0006508">
    <property type="term" value="P:proteolysis"/>
    <property type="evidence" value="ECO:0007669"/>
    <property type="project" value="UniProtKB-KW"/>
</dbReference>
<dbReference type="CDD" id="cd01087">
    <property type="entry name" value="Prolidase"/>
    <property type="match status" value="1"/>
</dbReference>
<dbReference type="FunFam" id="3.90.230.10:FF:000002">
    <property type="entry name" value="Xaa-Pro aminopeptidase 3"/>
    <property type="match status" value="1"/>
</dbReference>
<dbReference type="Gene3D" id="3.90.230.10">
    <property type="entry name" value="Creatinase/methionine aminopeptidase superfamily"/>
    <property type="match status" value="1"/>
</dbReference>
<dbReference type="Gene3D" id="3.40.350.10">
    <property type="entry name" value="Creatinase/prolidase N-terminal domain"/>
    <property type="match status" value="1"/>
</dbReference>
<dbReference type="InterPro" id="IPR007865">
    <property type="entry name" value="Aminopep_P_N"/>
</dbReference>
<dbReference type="InterPro" id="IPR029149">
    <property type="entry name" value="Creatin/AminoP/Spt16_N"/>
</dbReference>
<dbReference type="InterPro" id="IPR036005">
    <property type="entry name" value="Creatinase/aminopeptidase-like"/>
</dbReference>
<dbReference type="InterPro" id="IPR000994">
    <property type="entry name" value="Pept_M24"/>
</dbReference>
<dbReference type="InterPro" id="IPR052433">
    <property type="entry name" value="X-Pro_dipept-like"/>
</dbReference>
<dbReference type="PANTHER" id="PTHR43226">
    <property type="entry name" value="XAA-PRO AMINOPEPTIDASE 3"/>
    <property type="match status" value="1"/>
</dbReference>
<dbReference type="PANTHER" id="PTHR43226:SF1">
    <property type="entry name" value="XAA-PRO DIPEPTIDASE"/>
    <property type="match status" value="1"/>
</dbReference>
<dbReference type="Pfam" id="PF05195">
    <property type="entry name" value="AMP_N"/>
    <property type="match status" value="1"/>
</dbReference>
<dbReference type="Pfam" id="PF00557">
    <property type="entry name" value="Peptidase_M24"/>
    <property type="match status" value="1"/>
</dbReference>
<dbReference type="SMART" id="SM01011">
    <property type="entry name" value="AMP_N"/>
    <property type="match status" value="1"/>
</dbReference>
<dbReference type="SUPFAM" id="SSF55920">
    <property type="entry name" value="Creatinase/aminopeptidase"/>
    <property type="match status" value="1"/>
</dbReference>
<dbReference type="SUPFAM" id="SSF53092">
    <property type="entry name" value="Creatinase/prolidase N-terminal domain"/>
    <property type="match status" value="1"/>
</dbReference>
<name>AMPP3_COCPS</name>
<comment type="function">
    <text evidence="1">Catalyzes the removal of a penultimate prolyl residue from the N-termini of peptides.</text>
</comment>
<comment type="catalytic activity">
    <reaction>
        <text>Release of any N-terminal amino acid, including proline, that is linked to proline, even from a dipeptide or tripeptide.</text>
        <dbReference type="EC" id="3.4.11.9"/>
    </reaction>
</comment>
<comment type="cofactor">
    <cofactor evidence="1">
        <name>Mn(2+)</name>
        <dbReference type="ChEBI" id="CHEBI:29035"/>
    </cofactor>
    <text evidence="1">Binds 2 manganese ions per subunit.</text>
</comment>
<comment type="similarity">
    <text evidence="2">Belongs to the peptidase M24B family.</text>
</comment>
<sequence>MDSAVTAVLAGKYPAKQHARRVAEALKASGHDGSGVIYLEGTKTRMAEDSDEAVPFRQRRNFYYLSGCELADSYVTYNIDQDELVLYIPAADPDEVMWTGLPLSPEEALKKYDVDKVLASSEINAHLAHYCTNKETAPKRVYAIPDRVCAETTFLPFDDTNWDALSNALNQCRKVKDDYEIALLKRSNEISALAHLAVMKAAKLAKNERELEAVFRSTCLSHGSRGQSYGPIVAAGVNGATLHYQTNDMDLEDLVTGERPSLLVDAGGEYRLYCSDITRAYPLSGKFSVEARQIYDIVLDMQTQCMDMIKPGVAWDDIHARAHKVAISGLLRLGILRGSEEELFEKRISVAFFPHGLGHYMGMDTHDVGGNPNHADPNPMFRYLRLRGTLSPSEVVTVEPGVYFCRFIIEPYLSSPELGKYIDSAVLDKYWKVGGVRIEDNLVITQDGYLNLTTVPKDPEEVERIVQQG</sequence>
<gene>
    <name type="primary">PEPP</name>
    <name type="ORF">CPSG_08170</name>
</gene>
<accession>E9DDK8</accession>
<organism>
    <name type="scientific">Coccidioides posadasii (strain RMSCC 757 / Silveira)</name>
    <name type="common">Valley fever fungus</name>
    <dbReference type="NCBI Taxonomy" id="443226"/>
    <lineage>
        <taxon>Eukaryota</taxon>
        <taxon>Fungi</taxon>
        <taxon>Dikarya</taxon>
        <taxon>Ascomycota</taxon>
        <taxon>Pezizomycotina</taxon>
        <taxon>Eurotiomycetes</taxon>
        <taxon>Eurotiomycetidae</taxon>
        <taxon>Onygenales</taxon>
        <taxon>Onygenaceae</taxon>
        <taxon>Coccidioides</taxon>
    </lineage>
</organism>
<reference key="1">
    <citation type="submission" date="2010-03" db="EMBL/GenBank/DDBJ databases">
        <title>The genome sequence of Coccidioides posadasii strain Silveira.</title>
        <authorList>
            <consortium name="The Broad Institute Genome Sequencing Center for Infectious Disease"/>
            <person name="Neafsey D."/>
            <person name="Orbach M."/>
            <person name="Henn M.R."/>
            <person name="Cole G.T."/>
            <person name="Galgiani J."/>
            <person name="Gardner M.J."/>
            <person name="Kirkland T.N."/>
            <person name="Taylor J.W."/>
            <person name="Young S.K."/>
            <person name="Zeng Q."/>
            <person name="Koehrsen M."/>
            <person name="Alvarado L."/>
            <person name="Berlin A."/>
            <person name="Borenstein D."/>
            <person name="Chapman S.B."/>
            <person name="Chen Z."/>
            <person name="Engels R."/>
            <person name="Freedman E."/>
            <person name="Gellesch M."/>
            <person name="Goldberg J."/>
            <person name="Griggs A."/>
            <person name="Gujja S."/>
            <person name="Heilman E."/>
            <person name="Heiman D."/>
            <person name="Howarth C."/>
            <person name="Jen D."/>
            <person name="Larson L."/>
            <person name="Mehta T."/>
            <person name="Neiman D."/>
            <person name="Park D."/>
            <person name="Pearson M."/>
            <person name="Richards J."/>
            <person name="Roberts A."/>
            <person name="Saif S."/>
            <person name="Shea T."/>
            <person name="Shenoy N."/>
            <person name="Sisk P."/>
            <person name="Stolte C."/>
            <person name="Sykes S."/>
            <person name="Walk T."/>
            <person name="White J."/>
            <person name="Yandava C."/>
            <person name="Haas B."/>
            <person name="Nusbaum C."/>
            <person name="Birren B."/>
        </authorList>
    </citation>
    <scope>NUCLEOTIDE SEQUENCE [LARGE SCALE GENOMIC DNA]</scope>
    <source>
        <strain>RMSCC 757 / Silveira</strain>
    </source>
</reference>
<evidence type="ECO:0000250" key="1"/>
<evidence type="ECO:0000305" key="2"/>
<keyword id="KW-0031">Aminopeptidase</keyword>
<keyword id="KW-0378">Hydrolase</keyword>
<keyword id="KW-0464">Manganese</keyword>
<keyword id="KW-0479">Metal-binding</keyword>
<keyword id="KW-0482">Metalloprotease</keyword>
<keyword id="KW-0645">Protease</keyword>
<keyword id="KW-1185">Reference proteome</keyword>
<proteinExistence type="inferred from homology"/>
<feature type="chain" id="PRO_0000411870" description="Probable Xaa-Pro aminopeptidase PEPP">
    <location>
        <begin position="1"/>
        <end position="469"/>
    </location>
</feature>
<feature type="binding site" evidence="1">
    <location>
        <position position="265"/>
    </location>
    <ligand>
        <name>Mn(2+)</name>
        <dbReference type="ChEBI" id="CHEBI:29035"/>
        <label>2</label>
    </ligand>
</feature>
<feature type="binding site" evidence="1">
    <location>
        <position position="276"/>
    </location>
    <ligand>
        <name>Mn(2+)</name>
        <dbReference type="ChEBI" id="CHEBI:29035"/>
        <label>1</label>
    </ligand>
</feature>
<feature type="binding site" evidence="1">
    <location>
        <position position="276"/>
    </location>
    <ligand>
        <name>Mn(2+)</name>
        <dbReference type="ChEBI" id="CHEBI:29035"/>
        <label>2</label>
    </ligand>
</feature>
<feature type="binding site" evidence="1">
    <location>
        <position position="399"/>
    </location>
    <ligand>
        <name>Mn(2+)</name>
        <dbReference type="ChEBI" id="CHEBI:29035"/>
        <label>1</label>
    </ligand>
</feature>
<feature type="binding site" evidence="1">
    <location>
        <position position="439"/>
    </location>
    <ligand>
        <name>Mn(2+)</name>
        <dbReference type="ChEBI" id="CHEBI:29035"/>
        <label>1</label>
    </ligand>
</feature>
<feature type="binding site" evidence="1">
    <location>
        <position position="439"/>
    </location>
    <ligand>
        <name>Mn(2+)</name>
        <dbReference type="ChEBI" id="CHEBI:29035"/>
        <label>2</label>
    </ligand>
</feature>
<protein>
    <recommendedName>
        <fullName>Probable Xaa-Pro aminopeptidase PEPP</fullName>
        <ecNumber>3.4.11.9</ecNumber>
    </recommendedName>
    <alternativeName>
        <fullName>Aminoacylproline aminopeptidase</fullName>
    </alternativeName>
    <alternativeName>
        <fullName>Prolidase</fullName>
    </alternativeName>
</protein>